<comment type="function">
    <text evidence="1">The beta subunit is responsible for the synthesis of L-tryptophan from indole and L-serine.</text>
</comment>
<comment type="catalytic activity">
    <reaction evidence="1">
        <text>(1S,2R)-1-C-(indol-3-yl)glycerol 3-phosphate + L-serine = D-glyceraldehyde 3-phosphate + L-tryptophan + H2O</text>
        <dbReference type="Rhea" id="RHEA:10532"/>
        <dbReference type="ChEBI" id="CHEBI:15377"/>
        <dbReference type="ChEBI" id="CHEBI:33384"/>
        <dbReference type="ChEBI" id="CHEBI:57912"/>
        <dbReference type="ChEBI" id="CHEBI:58866"/>
        <dbReference type="ChEBI" id="CHEBI:59776"/>
        <dbReference type="EC" id="4.2.1.20"/>
    </reaction>
</comment>
<comment type="cofactor">
    <cofactor evidence="1">
        <name>pyridoxal 5'-phosphate</name>
        <dbReference type="ChEBI" id="CHEBI:597326"/>
    </cofactor>
</comment>
<comment type="pathway">
    <text evidence="1">Amino-acid biosynthesis; L-tryptophan biosynthesis; L-tryptophan from chorismate: step 5/5.</text>
</comment>
<comment type="subunit">
    <text evidence="1">Tetramer of two alpha and two beta chains.</text>
</comment>
<comment type="similarity">
    <text evidence="1">Belongs to the TrpB family.</text>
</comment>
<accession>C3LAV8</accession>
<feature type="chain" id="PRO_1000198738" description="Tryptophan synthase beta chain">
    <location>
        <begin position="1"/>
        <end position="397"/>
    </location>
</feature>
<feature type="modified residue" description="N6-(pyridoxal phosphate)lysine" evidence="1">
    <location>
        <position position="91"/>
    </location>
</feature>
<organism>
    <name type="scientific">Bacillus anthracis (strain CDC 684 / NRRL 3495)</name>
    <dbReference type="NCBI Taxonomy" id="568206"/>
    <lineage>
        <taxon>Bacteria</taxon>
        <taxon>Bacillati</taxon>
        <taxon>Bacillota</taxon>
        <taxon>Bacilli</taxon>
        <taxon>Bacillales</taxon>
        <taxon>Bacillaceae</taxon>
        <taxon>Bacillus</taxon>
        <taxon>Bacillus cereus group</taxon>
    </lineage>
</organism>
<keyword id="KW-0028">Amino-acid biosynthesis</keyword>
<keyword id="KW-0057">Aromatic amino acid biosynthesis</keyword>
<keyword id="KW-0456">Lyase</keyword>
<keyword id="KW-0663">Pyridoxal phosphate</keyword>
<keyword id="KW-0822">Tryptophan biosynthesis</keyword>
<sequence>MNYAYPDEKGHYGIYGGRYVPETLMQSVLELEEAYKEAMEDEAFQKELNHYLKTYVGRETPLYFAENMTEYCGGAKIYLKREDLNHTGAHKINNTIGQALLAVRMGKKKVVAETGAGQHGVATATVCALLGLECVIFMGEEDVRRQKLNVFRMELLGAKVESVAAGSGTLKDAVNEALRYWVSHVHDTHYIMGSVLGPHPFPQIVRDFQSVIGNETKKQYEALEGKLPEAVVACIGGGSNAMGMFYPFVHDEEVALYGVEAAGKGVHTEKHAATLTKGSVGVLHGSMMYLLQNEEGQIQEAHSISAGLDYPGVGPEHSLLKDIGRVSYHSITDDEALEAFQLLTKKEGIIPALESSHAVAYALKLAPQMKEDEGLVICLSGRGDKDVESIKRYMEEV</sequence>
<reference key="1">
    <citation type="submission" date="2008-10" db="EMBL/GenBank/DDBJ databases">
        <title>Genome sequence of Bacillus anthracis str. CDC 684.</title>
        <authorList>
            <person name="Dodson R.J."/>
            <person name="Munk A.C."/>
            <person name="Brettin T."/>
            <person name="Bruce D."/>
            <person name="Detter C."/>
            <person name="Tapia R."/>
            <person name="Han C."/>
            <person name="Sutton G."/>
            <person name="Sims D."/>
        </authorList>
    </citation>
    <scope>NUCLEOTIDE SEQUENCE [LARGE SCALE GENOMIC DNA]</scope>
    <source>
        <strain>CDC 684 / NRRL 3495</strain>
    </source>
</reference>
<evidence type="ECO:0000255" key="1">
    <source>
        <dbReference type="HAMAP-Rule" id="MF_00133"/>
    </source>
</evidence>
<proteinExistence type="inferred from homology"/>
<dbReference type="EC" id="4.2.1.20" evidence="1"/>
<dbReference type="EMBL" id="CP001215">
    <property type="protein sequence ID" value="ACP12950.1"/>
    <property type="molecule type" value="Genomic_DNA"/>
</dbReference>
<dbReference type="RefSeq" id="WP_001105001.1">
    <property type="nucleotide sequence ID" value="NC_012581.1"/>
</dbReference>
<dbReference type="SMR" id="C3LAV8"/>
<dbReference type="GeneID" id="45021253"/>
<dbReference type="KEGG" id="bah:BAMEG_3337"/>
<dbReference type="HOGENOM" id="CLU_016734_3_1_9"/>
<dbReference type="UniPathway" id="UPA00035">
    <property type="reaction ID" value="UER00044"/>
</dbReference>
<dbReference type="GO" id="GO:0005737">
    <property type="term" value="C:cytoplasm"/>
    <property type="evidence" value="ECO:0007669"/>
    <property type="project" value="TreeGrafter"/>
</dbReference>
<dbReference type="GO" id="GO:0004834">
    <property type="term" value="F:tryptophan synthase activity"/>
    <property type="evidence" value="ECO:0007669"/>
    <property type="project" value="UniProtKB-UniRule"/>
</dbReference>
<dbReference type="CDD" id="cd06446">
    <property type="entry name" value="Trp-synth_B"/>
    <property type="match status" value="1"/>
</dbReference>
<dbReference type="FunFam" id="3.40.50.1100:FF:000001">
    <property type="entry name" value="Tryptophan synthase beta chain"/>
    <property type="match status" value="1"/>
</dbReference>
<dbReference type="FunFam" id="3.40.50.1100:FF:000004">
    <property type="entry name" value="Tryptophan synthase beta chain"/>
    <property type="match status" value="1"/>
</dbReference>
<dbReference type="Gene3D" id="3.40.50.1100">
    <property type="match status" value="2"/>
</dbReference>
<dbReference type="HAMAP" id="MF_00133">
    <property type="entry name" value="Trp_synth_beta"/>
    <property type="match status" value="1"/>
</dbReference>
<dbReference type="InterPro" id="IPR006653">
    <property type="entry name" value="Trp_synth_b_CS"/>
</dbReference>
<dbReference type="InterPro" id="IPR006654">
    <property type="entry name" value="Trp_synth_beta"/>
</dbReference>
<dbReference type="InterPro" id="IPR023026">
    <property type="entry name" value="Trp_synth_beta/beta-like"/>
</dbReference>
<dbReference type="InterPro" id="IPR001926">
    <property type="entry name" value="TrpB-like_PALP"/>
</dbReference>
<dbReference type="InterPro" id="IPR036052">
    <property type="entry name" value="TrpB-like_PALP_sf"/>
</dbReference>
<dbReference type="NCBIfam" id="TIGR00263">
    <property type="entry name" value="trpB"/>
    <property type="match status" value="1"/>
</dbReference>
<dbReference type="PANTHER" id="PTHR48077:SF3">
    <property type="entry name" value="TRYPTOPHAN SYNTHASE"/>
    <property type="match status" value="1"/>
</dbReference>
<dbReference type="PANTHER" id="PTHR48077">
    <property type="entry name" value="TRYPTOPHAN SYNTHASE-RELATED"/>
    <property type="match status" value="1"/>
</dbReference>
<dbReference type="Pfam" id="PF00291">
    <property type="entry name" value="PALP"/>
    <property type="match status" value="1"/>
</dbReference>
<dbReference type="PIRSF" id="PIRSF001413">
    <property type="entry name" value="Trp_syn_beta"/>
    <property type="match status" value="1"/>
</dbReference>
<dbReference type="SUPFAM" id="SSF53686">
    <property type="entry name" value="Tryptophan synthase beta subunit-like PLP-dependent enzymes"/>
    <property type="match status" value="1"/>
</dbReference>
<dbReference type="PROSITE" id="PS00168">
    <property type="entry name" value="TRP_SYNTHASE_BETA"/>
    <property type="match status" value="1"/>
</dbReference>
<name>TRPB_BACAC</name>
<gene>
    <name evidence="1" type="primary">trpB</name>
    <name type="ordered locus">BAMEG_3337</name>
</gene>
<protein>
    <recommendedName>
        <fullName evidence="1">Tryptophan synthase beta chain</fullName>
        <ecNumber evidence="1">4.2.1.20</ecNumber>
    </recommendedName>
</protein>